<name>EFTS_RHIWR</name>
<comment type="function">
    <text evidence="1">Associates with the EF-Tu.GDP complex and induces the exchange of GDP to GTP. It remains bound to the aminoacyl-tRNA.EF-Tu.GTP complex up to the GTP hydrolysis stage on the ribosome.</text>
</comment>
<comment type="subcellular location">
    <subcellularLocation>
        <location evidence="1">Cytoplasm</location>
    </subcellularLocation>
</comment>
<comment type="similarity">
    <text evidence="1">Belongs to the EF-Ts family.</text>
</comment>
<evidence type="ECO:0000255" key="1">
    <source>
        <dbReference type="HAMAP-Rule" id="MF_00050"/>
    </source>
</evidence>
<keyword id="KW-0963">Cytoplasm</keyword>
<keyword id="KW-0251">Elongation factor</keyword>
<keyword id="KW-0648">Protein biosynthesis</keyword>
<keyword id="KW-1185">Reference proteome</keyword>
<dbReference type="EMBL" id="CP000699">
    <property type="protein sequence ID" value="ABQ66829.1"/>
    <property type="molecule type" value="Genomic_DNA"/>
</dbReference>
<dbReference type="SMR" id="A5V3G3"/>
<dbReference type="STRING" id="392499.Swit_0461"/>
<dbReference type="PaxDb" id="392499-Swit_0461"/>
<dbReference type="KEGG" id="swi:Swit_0461"/>
<dbReference type="eggNOG" id="COG0264">
    <property type="taxonomic scope" value="Bacteria"/>
</dbReference>
<dbReference type="HOGENOM" id="CLU_047155_2_0_5"/>
<dbReference type="OrthoDB" id="9808348at2"/>
<dbReference type="Proteomes" id="UP000001989">
    <property type="component" value="Chromosome"/>
</dbReference>
<dbReference type="GO" id="GO:0005737">
    <property type="term" value="C:cytoplasm"/>
    <property type="evidence" value="ECO:0007669"/>
    <property type="project" value="UniProtKB-SubCell"/>
</dbReference>
<dbReference type="GO" id="GO:0003746">
    <property type="term" value="F:translation elongation factor activity"/>
    <property type="evidence" value="ECO:0007669"/>
    <property type="project" value="UniProtKB-UniRule"/>
</dbReference>
<dbReference type="CDD" id="cd14275">
    <property type="entry name" value="UBA_EF-Ts"/>
    <property type="match status" value="1"/>
</dbReference>
<dbReference type="FunFam" id="1.10.8.10:FF:000001">
    <property type="entry name" value="Elongation factor Ts"/>
    <property type="match status" value="1"/>
</dbReference>
<dbReference type="Gene3D" id="1.10.286.20">
    <property type="match status" value="1"/>
</dbReference>
<dbReference type="Gene3D" id="1.10.8.10">
    <property type="entry name" value="DNA helicase RuvA subunit, C-terminal domain"/>
    <property type="match status" value="1"/>
</dbReference>
<dbReference type="Gene3D" id="3.30.479.20">
    <property type="entry name" value="Elongation factor Ts, dimerisation domain"/>
    <property type="match status" value="2"/>
</dbReference>
<dbReference type="HAMAP" id="MF_00050">
    <property type="entry name" value="EF_Ts"/>
    <property type="match status" value="1"/>
</dbReference>
<dbReference type="InterPro" id="IPR036402">
    <property type="entry name" value="EF-Ts_dimer_sf"/>
</dbReference>
<dbReference type="InterPro" id="IPR001816">
    <property type="entry name" value="Transl_elong_EFTs/EF1B"/>
</dbReference>
<dbReference type="InterPro" id="IPR014039">
    <property type="entry name" value="Transl_elong_EFTs/EF1B_dimer"/>
</dbReference>
<dbReference type="InterPro" id="IPR018101">
    <property type="entry name" value="Transl_elong_Ts_CS"/>
</dbReference>
<dbReference type="InterPro" id="IPR009060">
    <property type="entry name" value="UBA-like_sf"/>
</dbReference>
<dbReference type="NCBIfam" id="TIGR00116">
    <property type="entry name" value="tsf"/>
    <property type="match status" value="1"/>
</dbReference>
<dbReference type="PANTHER" id="PTHR11741">
    <property type="entry name" value="ELONGATION FACTOR TS"/>
    <property type="match status" value="1"/>
</dbReference>
<dbReference type="PANTHER" id="PTHR11741:SF0">
    <property type="entry name" value="ELONGATION FACTOR TS, MITOCHONDRIAL"/>
    <property type="match status" value="1"/>
</dbReference>
<dbReference type="Pfam" id="PF00889">
    <property type="entry name" value="EF_TS"/>
    <property type="match status" value="1"/>
</dbReference>
<dbReference type="SUPFAM" id="SSF54713">
    <property type="entry name" value="Elongation factor Ts (EF-Ts), dimerisation domain"/>
    <property type="match status" value="2"/>
</dbReference>
<dbReference type="SUPFAM" id="SSF46934">
    <property type="entry name" value="UBA-like"/>
    <property type="match status" value="1"/>
</dbReference>
<dbReference type="PROSITE" id="PS01126">
    <property type="entry name" value="EF_TS_1"/>
    <property type="match status" value="1"/>
</dbReference>
<dbReference type="PROSITE" id="PS01127">
    <property type="entry name" value="EF_TS_2"/>
    <property type="match status" value="1"/>
</dbReference>
<reference key="1">
    <citation type="journal article" date="2010" name="J. Bacteriol.">
        <title>Genome sequence of the dioxin-mineralizing bacterium Sphingomonas wittichii RW1.</title>
        <authorList>
            <person name="Miller T.R."/>
            <person name="Delcher A.L."/>
            <person name="Salzberg S.L."/>
            <person name="Saunders E."/>
            <person name="Detter J.C."/>
            <person name="Halden R.U."/>
        </authorList>
    </citation>
    <scope>NUCLEOTIDE SEQUENCE [LARGE SCALE GENOMIC DNA]</scope>
    <source>
        <strain>DSM 6014 / CCUG 31198 / JCM 15750 / NBRC 105917 / EY 4224 / RW1</strain>
    </source>
</reference>
<sequence length="307" mass="31723">MAEITAAAVKELREKSGAGMMDCKKALTETNGDMEAAVDWLRTKGLATAAKKSSRTAAEGLVGVSVEGTKGAAVEVNSETDFVAKNDQFQDFVRTVTQLALTAGDDVAALAGAGYPGGGTVAEKLTSNIATIGENQTLRRAKVVEVSKGTVVPYVHNAAVPGLGKIGVLVALEGDAPVAEMETVGKQIAMHIAAAFPQALTEDGLDPVVIERERAIAAEKAAESGKPAEIVEKMVQGAVAKFRKENALLSQVFVIDNKTPIAQVVANAAKAAGGSITLKDYVRFQLGEGIEKETSDFAAEVAAAVKG</sequence>
<protein>
    <recommendedName>
        <fullName evidence="1">Elongation factor Ts</fullName>
        <shortName evidence="1">EF-Ts</shortName>
    </recommendedName>
</protein>
<gene>
    <name evidence="1" type="primary">tsf</name>
    <name type="ordered locus">Swit_0461</name>
</gene>
<proteinExistence type="inferred from homology"/>
<feature type="chain" id="PRO_1000006187" description="Elongation factor Ts">
    <location>
        <begin position="1"/>
        <end position="307"/>
    </location>
</feature>
<feature type="region of interest" description="Involved in Mg(2+) ion dislocation from EF-Tu" evidence="1">
    <location>
        <begin position="80"/>
        <end position="83"/>
    </location>
</feature>
<accession>A5V3G3</accession>
<organism>
    <name type="scientific">Rhizorhabdus wittichii (strain DSM 6014 / CCUG 31198 / JCM 15750 / NBRC 105917 / EY 4224 / RW1)</name>
    <name type="common">Sphingomonas wittichii</name>
    <dbReference type="NCBI Taxonomy" id="392499"/>
    <lineage>
        <taxon>Bacteria</taxon>
        <taxon>Pseudomonadati</taxon>
        <taxon>Pseudomonadota</taxon>
        <taxon>Alphaproteobacteria</taxon>
        <taxon>Sphingomonadales</taxon>
        <taxon>Sphingomonadaceae</taxon>
        <taxon>Rhizorhabdus</taxon>
    </lineage>
</organism>